<accession>P16923</accession>
<reference key="1">
    <citation type="journal article" date="1990" name="Mol. Biol. Evol.">
        <title>An evolutionary comparison of Acinetobacter calcoaceticus trpF with trpF genes of several organisms.</title>
        <authorList>
            <person name="Ross C.M."/>
            <person name="Kaplan J.B."/>
            <person name="Winkler M.E."/>
            <person name="Nichols B.P."/>
        </authorList>
    </citation>
    <scope>NUCLEOTIDE SEQUENCE [GENOMIC DNA]</scope>
</reference>
<reference key="2">
    <citation type="journal article" date="1990" name="J. Bacteriol.">
        <title>Molecular cloning, nucleotide sequence, and promoter structure of the Acinetobacter calcoaceticus trpFB operon.</title>
        <authorList>
            <person name="Kishan V."/>
            <person name="Hillen W."/>
        </authorList>
    </citation>
    <scope>NUCLEOTIDE SEQUENCE [GENOMIC DNA]</scope>
</reference>
<gene>
    <name type="primary">trpF</name>
</gene>
<feature type="chain" id="PRO_0000154339" description="N-(5'-phosphoribosyl)anthranilate isomerase">
    <location>
        <begin position="1"/>
        <end position="213"/>
    </location>
</feature>
<organism>
    <name type="scientific">Acinetobacter calcoaceticus</name>
    <dbReference type="NCBI Taxonomy" id="471"/>
    <lineage>
        <taxon>Bacteria</taxon>
        <taxon>Pseudomonadati</taxon>
        <taxon>Pseudomonadota</taxon>
        <taxon>Gammaproteobacteria</taxon>
        <taxon>Moraxellales</taxon>
        <taxon>Moraxellaceae</taxon>
        <taxon>Acinetobacter</taxon>
        <taxon>Acinetobacter calcoaceticus/baumannii complex</taxon>
    </lineage>
</organism>
<protein>
    <recommendedName>
        <fullName>N-(5'-phosphoribosyl)anthranilate isomerase</fullName>
        <shortName>PRAI</shortName>
        <ecNumber>5.3.1.24</ecNumber>
    </recommendedName>
</protein>
<comment type="catalytic activity">
    <reaction>
        <text>N-(5-phospho-beta-D-ribosyl)anthranilate = 1-(2-carboxyphenylamino)-1-deoxy-D-ribulose 5-phosphate</text>
        <dbReference type="Rhea" id="RHEA:21540"/>
        <dbReference type="ChEBI" id="CHEBI:18277"/>
        <dbReference type="ChEBI" id="CHEBI:58613"/>
        <dbReference type="EC" id="5.3.1.24"/>
    </reaction>
</comment>
<comment type="pathway">
    <text>Amino-acid biosynthesis; L-tryptophan biosynthesis; L-tryptophan from chorismate: step 3/5.</text>
</comment>
<comment type="similarity">
    <text evidence="1">Belongs to the TrpF family.</text>
</comment>
<dbReference type="EC" id="5.3.1.24"/>
<dbReference type="EMBL" id="M34485">
    <property type="protein sequence ID" value="AAA21897.1"/>
    <property type="molecule type" value="Genomic_DNA"/>
</dbReference>
<dbReference type="EMBL" id="M58444">
    <property type="protein sequence ID" value="AAA21901.1"/>
    <property type="molecule type" value="Genomic_DNA"/>
</dbReference>
<dbReference type="PIR" id="A34091">
    <property type="entry name" value="A34091"/>
</dbReference>
<dbReference type="SMR" id="P16923"/>
<dbReference type="STRING" id="471.BUM88_16530"/>
<dbReference type="UniPathway" id="UPA00035">
    <property type="reaction ID" value="UER00042"/>
</dbReference>
<dbReference type="GO" id="GO:0004640">
    <property type="term" value="F:phosphoribosylanthranilate isomerase activity"/>
    <property type="evidence" value="ECO:0007669"/>
    <property type="project" value="UniProtKB-UniRule"/>
</dbReference>
<dbReference type="GO" id="GO:0000162">
    <property type="term" value="P:L-tryptophan biosynthetic process"/>
    <property type="evidence" value="ECO:0007669"/>
    <property type="project" value="UniProtKB-UniRule"/>
</dbReference>
<dbReference type="CDD" id="cd00405">
    <property type="entry name" value="PRAI"/>
    <property type="match status" value="1"/>
</dbReference>
<dbReference type="FunFam" id="3.20.20.70:FF:000075">
    <property type="entry name" value="Tryptophan biosynthesis protein TRP1"/>
    <property type="match status" value="1"/>
</dbReference>
<dbReference type="Gene3D" id="3.20.20.70">
    <property type="entry name" value="Aldolase class I"/>
    <property type="match status" value="1"/>
</dbReference>
<dbReference type="HAMAP" id="MF_00135">
    <property type="entry name" value="PRAI"/>
    <property type="match status" value="1"/>
</dbReference>
<dbReference type="InterPro" id="IPR013785">
    <property type="entry name" value="Aldolase_TIM"/>
</dbReference>
<dbReference type="InterPro" id="IPR001240">
    <property type="entry name" value="PRAI_dom"/>
</dbReference>
<dbReference type="InterPro" id="IPR011060">
    <property type="entry name" value="RibuloseP-bd_barrel"/>
</dbReference>
<dbReference type="InterPro" id="IPR044643">
    <property type="entry name" value="TrpF_fam"/>
</dbReference>
<dbReference type="NCBIfam" id="NF002298">
    <property type="entry name" value="PRK01222.1-4"/>
    <property type="match status" value="1"/>
</dbReference>
<dbReference type="NCBIfam" id="NF002299">
    <property type="entry name" value="PRK01222.1-6"/>
    <property type="match status" value="1"/>
</dbReference>
<dbReference type="PANTHER" id="PTHR42894">
    <property type="entry name" value="N-(5'-PHOSPHORIBOSYL)ANTHRANILATE ISOMERASE"/>
    <property type="match status" value="1"/>
</dbReference>
<dbReference type="PANTHER" id="PTHR42894:SF1">
    <property type="entry name" value="N-(5'-PHOSPHORIBOSYL)ANTHRANILATE ISOMERASE"/>
    <property type="match status" value="1"/>
</dbReference>
<dbReference type="Pfam" id="PF00697">
    <property type="entry name" value="PRAI"/>
    <property type="match status" value="1"/>
</dbReference>
<dbReference type="SUPFAM" id="SSF51366">
    <property type="entry name" value="Ribulose-phoshate binding barrel"/>
    <property type="match status" value="1"/>
</dbReference>
<proteinExistence type="inferred from homology"/>
<keyword id="KW-0028">Amino-acid biosynthesis</keyword>
<keyword id="KW-0057">Aromatic amino acid biosynthesis</keyword>
<keyword id="KW-0413">Isomerase</keyword>
<keyword id="KW-0822">Tryptophan biosynthesis</keyword>
<evidence type="ECO:0000305" key="1"/>
<name>TRPF_ACICA</name>
<sequence length="213" mass="23005">MRTRAKICGITRSQDVQAAVSAGADAIGLVFFPPSPRHVSIAQAQALLQHIPAYVQVVGLFVNATADQIKSVLDCVALDVLQLHGDETPEQCQEIALQCKRRWYKAIQVKPELDVVDEVQRYQAAGASAVLLDAWHPELKGGTGHQFDWSKFPKLDIPLILAGGLTPENVVDAIQTTHAFAVDVSGGVEAAKGIKDKQLIERFMQGVQCGSAK</sequence>